<evidence type="ECO:0000255" key="1">
    <source>
        <dbReference type="HAMAP-Rule" id="MF_00246"/>
    </source>
</evidence>
<evidence type="ECO:0000305" key="2"/>
<dbReference type="EC" id="2.7.1.6" evidence="1"/>
<dbReference type="EMBL" id="U21942">
    <property type="protein sequence ID" value="AAB49736.1"/>
    <property type="molecule type" value="Genomic_DNA"/>
</dbReference>
<dbReference type="EMBL" id="AE014133">
    <property type="protein sequence ID" value="AAN58600.1"/>
    <property type="molecule type" value="Genomic_DNA"/>
</dbReference>
<dbReference type="PIR" id="JC5311">
    <property type="entry name" value="JC5311"/>
</dbReference>
<dbReference type="RefSeq" id="NP_721294.1">
    <property type="nucleotide sequence ID" value="NC_004350.2"/>
</dbReference>
<dbReference type="RefSeq" id="WP_002262879.1">
    <property type="nucleotide sequence ID" value="NC_004350.2"/>
</dbReference>
<dbReference type="SMR" id="P96993"/>
<dbReference type="STRING" id="210007.SMU_886"/>
<dbReference type="KEGG" id="smu:SMU_886"/>
<dbReference type="PATRIC" id="fig|210007.7.peg.793"/>
<dbReference type="eggNOG" id="COG0153">
    <property type="taxonomic scope" value="Bacteria"/>
</dbReference>
<dbReference type="HOGENOM" id="CLU_017814_2_1_9"/>
<dbReference type="OrthoDB" id="250531at2"/>
<dbReference type="PhylomeDB" id="P96993"/>
<dbReference type="UniPathway" id="UPA00214"/>
<dbReference type="Proteomes" id="UP000002512">
    <property type="component" value="Chromosome"/>
</dbReference>
<dbReference type="GO" id="GO:0005829">
    <property type="term" value="C:cytosol"/>
    <property type="evidence" value="ECO:0007669"/>
    <property type="project" value="TreeGrafter"/>
</dbReference>
<dbReference type="GO" id="GO:0005524">
    <property type="term" value="F:ATP binding"/>
    <property type="evidence" value="ECO:0007669"/>
    <property type="project" value="UniProtKB-UniRule"/>
</dbReference>
<dbReference type="GO" id="GO:0004335">
    <property type="term" value="F:galactokinase activity"/>
    <property type="evidence" value="ECO:0007669"/>
    <property type="project" value="UniProtKB-UniRule"/>
</dbReference>
<dbReference type="GO" id="GO:0000287">
    <property type="term" value="F:magnesium ion binding"/>
    <property type="evidence" value="ECO:0007669"/>
    <property type="project" value="UniProtKB-UniRule"/>
</dbReference>
<dbReference type="GO" id="GO:0006012">
    <property type="term" value="P:galactose metabolic process"/>
    <property type="evidence" value="ECO:0000315"/>
    <property type="project" value="CACAO"/>
</dbReference>
<dbReference type="FunFam" id="3.30.230.10:FF:000017">
    <property type="entry name" value="Galactokinase"/>
    <property type="match status" value="1"/>
</dbReference>
<dbReference type="FunFam" id="3.30.70.890:FF:000001">
    <property type="entry name" value="Galactokinase"/>
    <property type="match status" value="1"/>
</dbReference>
<dbReference type="Gene3D" id="3.30.230.10">
    <property type="match status" value="1"/>
</dbReference>
<dbReference type="Gene3D" id="3.30.70.890">
    <property type="entry name" value="GHMP kinase, C-terminal domain"/>
    <property type="match status" value="1"/>
</dbReference>
<dbReference type="HAMAP" id="MF_00246">
    <property type="entry name" value="Galactokinase"/>
    <property type="match status" value="1"/>
</dbReference>
<dbReference type="InterPro" id="IPR000705">
    <property type="entry name" value="Galactokinase"/>
</dbReference>
<dbReference type="InterPro" id="IPR022963">
    <property type="entry name" value="Galactokinase_bac"/>
</dbReference>
<dbReference type="InterPro" id="IPR019741">
    <property type="entry name" value="Galactokinase_CS"/>
</dbReference>
<dbReference type="InterPro" id="IPR019539">
    <property type="entry name" value="GalKase_N"/>
</dbReference>
<dbReference type="InterPro" id="IPR013750">
    <property type="entry name" value="GHMP_kinase_C_dom"/>
</dbReference>
<dbReference type="InterPro" id="IPR036554">
    <property type="entry name" value="GHMP_kinase_C_sf"/>
</dbReference>
<dbReference type="InterPro" id="IPR006204">
    <property type="entry name" value="GHMP_kinase_N_dom"/>
</dbReference>
<dbReference type="InterPro" id="IPR006203">
    <property type="entry name" value="GHMP_knse_ATP-bd_CS"/>
</dbReference>
<dbReference type="InterPro" id="IPR006206">
    <property type="entry name" value="Mevalonate/galactokinase"/>
</dbReference>
<dbReference type="InterPro" id="IPR020568">
    <property type="entry name" value="Ribosomal_Su5_D2-typ_SF"/>
</dbReference>
<dbReference type="InterPro" id="IPR014721">
    <property type="entry name" value="Ribsml_uS5_D2-typ_fold_subgr"/>
</dbReference>
<dbReference type="NCBIfam" id="TIGR00131">
    <property type="entry name" value="gal_kin"/>
    <property type="match status" value="1"/>
</dbReference>
<dbReference type="NCBIfam" id="NF003705">
    <property type="entry name" value="PRK05322.1"/>
    <property type="match status" value="1"/>
</dbReference>
<dbReference type="PANTHER" id="PTHR10457:SF7">
    <property type="entry name" value="GALACTOKINASE-RELATED"/>
    <property type="match status" value="1"/>
</dbReference>
<dbReference type="PANTHER" id="PTHR10457">
    <property type="entry name" value="MEVALONATE KINASE/GALACTOKINASE"/>
    <property type="match status" value="1"/>
</dbReference>
<dbReference type="Pfam" id="PF10509">
    <property type="entry name" value="GalKase_gal_bdg"/>
    <property type="match status" value="1"/>
</dbReference>
<dbReference type="Pfam" id="PF08544">
    <property type="entry name" value="GHMP_kinases_C"/>
    <property type="match status" value="1"/>
</dbReference>
<dbReference type="Pfam" id="PF00288">
    <property type="entry name" value="GHMP_kinases_N"/>
    <property type="match status" value="1"/>
</dbReference>
<dbReference type="PIRSF" id="PIRSF000530">
    <property type="entry name" value="Galactokinase"/>
    <property type="match status" value="1"/>
</dbReference>
<dbReference type="PRINTS" id="PR00473">
    <property type="entry name" value="GALCTOKINASE"/>
</dbReference>
<dbReference type="PRINTS" id="PR00959">
    <property type="entry name" value="MEVGALKINASE"/>
</dbReference>
<dbReference type="SUPFAM" id="SSF55060">
    <property type="entry name" value="GHMP Kinase, C-terminal domain"/>
    <property type="match status" value="1"/>
</dbReference>
<dbReference type="SUPFAM" id="SSF54211">
    <property type="entry name" value="Ribosomal protein S5 domain 2-like"/>
    <property type="match status" value="1"/>
</dbReference>
<dbReference type="PROSITE" id="PS00106">
    <property type="entry name" value="GALACTOKINASE"/>
    <property type="match status" value="1"/>
</dbReference>
<dbReference type="PROSITE" id="PS00627">
    <property type="entry name" value="GHMP_KINASES_ATP"/>
    <property type="match status" value="1"/>
</dbReference>
<sequence length="390" mass="43235">MKKQELNQAFTHVFGREADATFFSPGRINLIGEHTDYNGGRVFPAAITLGTYGAARKRDDKLLRFYSANFEELGIIEISLDHLIFNKKDSWTNYPKGVIKYLQEAGHSIDTGMDVYVFGNIPNGSGLSSSSSLELLIGIMAEELFDLKLDRLDLVKIGKRTENDFIGVNSGIMDQFAIGMGAEKKAIYLDTKTLEYDLVPLDLGDNVIVIMNTNKRRELADSKYNERRTECEKAVEELNVLLDIKSLGELDEETFDEYAYLIKDAKRIKRARHAVSENQRTLKAKKALAAGDLEKFGRLVNASHVSLEHDYEVTGIELDTLAHTAWEQEGVLGARMTGAGFGGCGIAIVAKDKVAALKENVGRIYTETVGYAPAFYIAEIAGGSRVLSRK</sequence>
<gene>
    <name evidence="1" type="primary">galK</name>
    <name type="ordered locus">SMU_886</name>
</gene>
<comment type="function">
    <text evidence="1">Catalyzes the transfer of the gamma-phosphate of ATP to D-galactose to form alpha-D-galactose-1-phosphate (Gal-1-P).</text>
</comment>
<comment type="catalytic activity">
    <reaction evidence="1">
        <text>alpha-D-galactose + ATP = alpha-D-galactose 1-phosphate + ADP + H(+)</text>
        <dbReference type="Rhea" id="RHEA:13553"/>
        <dbReference type="ChEBI" id="CHEBI:15378"/>
        <dbReference type="ChEBI" id="CHEBI:28061"/>
        <dbReference type="ChEBI" id="CHEBI:30616"/>
        <dbReference type="ChEBI" id="CHEBI:58336"/>
        <dbReference type="ChEBI" id="CHEBI:456216"/>
        <dbReference type="EC" id="2.7.1.6"/>
    </reaction>
</comment>
<comment type="pathway">
    <text evidence="1">Carbohydrate metabolism; galactose metabolism.</text>
</comment>
<comment type="subcellular location">
    <subcellularLocation>
        <location evidence="1">Cytoplasm</location>
    </subcellularLocation>
</comment>
<comment type="similarity">
    <text evidence="1">Belongs to the GHMP kinase family. GalK subfamily.</text>
</comment>
<proteinExistence type="inferred from homology"/>
<organism>
    <name type="scientific">Streptococcus mutans serotype c (strain ATCC 700610 / UA159)</name>
    <dbReference type="NCBI Taxonomy" id="210007"/>
    <lineage>
        <taxon>Bacteria</taxon>
        <taxon>Bacillati</taxon>
        <taxon>Bacillota</taxon>
        <taxon>Bacilli</taxon>
        <taxon>Lactobacillales</taxon>
        <taxon>Streptococcaceae</taxon>
        <taxon>Streptococcus</taxon>
    </lineage>
</organism>
<keyword id="KW-0067">ATP-binding</keyword>
<keyword id="KW-0119">Carbohydrate metabolism</keyword>
<keyword id="KW-0963">Cytoplasm</keyword>
<keyword id="KW-0299">Galactose metabolism</keyword>
<keyword id="KW-0418">Kinase</keyword>
<keyword id="KW-0460">Magnesium</keyword>
<keyword id="KW-0479">Metal-binding</keyword>
<keyword id="KW-0547">Nucleotide-binding</keyword>
<keyword id="KW-1185">Reference proteome</keyword>
<keyword id="KW-0808">Transferase</keyword>
<name>GAL1_STRMU</name>
<accession>P96993</accession>
<reference key="1">
    <citation type="journal article" date="1996" name="Gene">
        <title>Organization and nucleotide sequence of the Streptococcus mutans galactose operon.</title>
        <authorList>
            <person name="Ajdic D."/>
            <person name="Sutcliffe I.C."/>
            <person name="Russell R.R.B."/>
            <person name="Ferretti J.J."/>
        </authorList>
    </citation>
    <scope>NUCLEOTIDE SEQUENCE [GENOMIC DNA]</scope>
    <source>
        <strain>Ingbritt</strain>
    </source>
</reference>
<reference key="2">
    <citation type="journal article" date="2002" name="Proc. Natl. Acad. Sci. U.S.A.">
        <title>Genome sequence of Streptococcus mutans UA159, a cariogenic dental pathogen.</title>
        <authorList>
            <person name="Ajdic D.J."/>
            <person name="McShan W.M."/>
            <person name="McLaughlin R.E."/>
            <person name="Savic G."/>
            <person name="Chang J."/>
            <person name="Carson M.B."/>
            <person name="Primeaux C."/>
            <person name="Tian R."/>
            <person name="Kenton S."/>
            <person name="Jia H.G."/>
            <person name="Lin S.P."/>
            <person name="Qian Y."/>
            <person name="Li S."/>
            <person name="Zhu H."/>
            <person name="Najar F.Z."/>
            <person name="Lai H."/>
            <person name="White J."/>
            <person name="Roe B.A."/>
            <person name="Ferretti J.J."/>
        </authorList>
    </citation>
    <scope>NUCLEOTIDE SEQUENCE [LARGE SCALE GENOMIC DNA]</scope>
    <source>
        <strain>ATCC 700610 / UA159</strain>
    </source>
</reference>
<protein>
    <recommendedName>
        <fullName evidence="1">Galactokinase</fullName>
        <ecNumber evidence="1">2.7.1.6</ecNumber>
    </recommendedName>
    <alternativeName>
        <fullName evidence="1">Galactose kinase</fullName>
    </alternativeName>
</protein>
<feature type="chain" id="PRO_0000184627" description="Galactokinase">
    <location>
        <begin position="1"/>
        <end position="390"/>
    </location>
</feature>
<feature type="active site" description="Proton acceptor" evidence="1">
    <location>
        <position position="174"/>
    </location>
</feature>
<feature type="binding site" evidence="1">
    <location>
        <begin position="33"/>
        <end position="36"/>
    </location>
    <ligand>
        <name>substrate</name>
    </ligand>
</feature>
<feature type="binding site" evidence="1">
    <location>
        <position position="67"/>
    </location>
    <ligand>
        <name>ATP</name>
        <dbReference type="ChEBI" id="CHEBI:30616"/>
    </ligand>
</feature>
<feature type="binding site" evidence="1">
    <location>
        <begin position="124"/>
        <end position="130"/>
    </location>
    <ligand>
        <name>ATP</name>
        <dbReference type="ChEBI" id="CHEBI:30616"/>
    </ligand>
</feature>
<feature type="binding site" evidence="1">
    <location>
        <position position="130"/>
    </location>
    <ligand>
        <name>Mg(2+)</name>
        <dbReference type="ChEBI" id="CHEBI:18420"/>
    </ligand>
</feature>
<feature type="binding site" evidence="1">
    <location>
        <position position="162"/>
    </location>
    <ligand>
        <name>Mg(2+)</name>
        <dbReference type="ChEBI" id="CHEBI:18420"/>
    </ligand>
</feature>
<feature type="binding site" evidence="1">
    <location>
        <position position="224"/>
    </location>
    <ligand>
        <name>substrate</name>
    </ligand>
</feature>
<feature type="site" description="Transition state stabilizer" evidence="1">
    <location>
        <position position="27"/>
    </location>
</feature>
<feature type="sequence conflict" description="In Ref. 1; AAB49736." evidence="2" ref="1">
    <original>P</original>
    <variation>A</variation>
    <location>
        <position position="95"/>
    </location>
</feature>
<feature type="sequence conflict" description="In Ref. 1; AAB49736." evidence="2" ref="1">
    <original>S</original>
    <variation>T</variation>
    <location>
        <position position="246"/>
    </location>
</feature>
<feature type="sequence conflict" description="In Ref. 1; AAB49736." evidence="2" ref="1">
    <original>A</original>
    <variation>S</variation>
    <location>
        <position position="339"/>
    </location>
</feature>
<feature type="sequence conflict" description="In Ref. 1; AAB49736." evidence="2" ref="1">
    <original>A</original>
    <variation>R</variation>
    <location>
        <position position="374"/>
    </location>
</feature>